<keyword id="KW-0275">Fatty acid biosynthesis</keyword>
<keyword id="KW-0276">Fatty acid metabolism</keyword>
<keyword id="KW-0408">Iron</keyword>
<keyword id="KW-0444">Lipid biosynthesis</keyword>
<keyword id="KW-0443">Lipid metabolism</keyword>
<keyword id="KW-0472">Membrane</keyword>
<keyword id="KW-0560">Oxidoreductase</keyword>
<keyword id="KW-0812">Transmembrane</keyword>
<keyword id="KW-1133">Transmembrane helix</keyword>
<accession>Q79F72</accession>
<name>DESA_ANAVA</name>
<dbReference type="EC" id="1.14.19.45" evidence="4"/>
<dbReference type="EMBL" id="D14581">
    <property type="protein sequence ID" value="BAA03435.1"/>
    <property type="molecule type" value="Genomic_DNA"/>
</dbReference>
<dbReference type="SMR" id="Q79F72"/>
<dbReference type="BRENDA" id="1.14.19.45">
    <property type="organism ID" value="322"/>
</dbReference>
<dbReference type="UniPathway" id="UPA00658"/>
<dbReference type="GO" id="GO:0016020">
    <property type="term" value="C:membrane"/>
    <property type="evidence" value="ECO:0007669"/>
    <property type="project" value="UniProtKB-SubCell"/>
</dbReference>
<dbReference type="GO" id="GO:0016491">
    <property type="term" value="F:oxidoreductase activity"/>
    <property type="evidence" value="ECO:0007669"/>
    <property type="project" value="UniProtKB-KW"/>
</dbReference>
<dbReference type="GO" id="GO:0006636">
    <property type="term" value="P:unsaturated fatty acid biosynthetic process"/>
    <property type="evidence" value="ECO:0007669"/>
    <property type="project" value="UniProtKB-UniPathway"/>
</dbReference>
<dbReference type="CDD" id="cd03507">
    <property type="entry name" value="Delta12-FADS-like"/>
    <property type="match status" value="1"/>
</dbReference>
<dbReference type="InterPro" id="IPR005804">
    <property type="entry name" value="FA_desaturase_dom"/>
</dbReference>
<dbReference type="InterPro" id="IPR012171">
    <property type="entry name" value="Fatty_acid_desaturase"/>
</dbReference>
<dbReference type="PANTHER" id="PTHR32100">
    <property type="entry name" value="OMEGA-6 FATTY ACID DESATURASE, CHLOROPLASTIC"/>
    <property type="match status" value="1"/>
</dbReference>
<dbReference type="Pfam" id="PF00487">
    <property type="entry name" value="FA_desaturase"/>
    <property type="match status" value="1"/>
</dbReference>
<organism>
    <name type="scientific">Anabaena variabilis</name>
    <dbReference type="NCBI Taxonomy" id="264691"/>
    <lineage>
        <taxon>Bacteria</taxon>
        <taxon>Bacillati</taxon>
        <taxon>Cyanobacteriota</taxon>
        <taxon>Cyanophyceae</taxon>
        <taxon>Nostocales</taxon>
        <taxon>Nostocaceae</taxon>
        <taxon>Trichormus</taxon>
    </lineage>
</organism>
<evidence type="ECO:0000250" key="1">
    <source>
        <dbReference type="UniProtKB" id="O00767"/>
    </source>
</evidence>
<evidence type="ECO:0000250" key="2">
    <source>
        <dbReference type="UniProtKB" id="Q54795"/>
    </source>
</evidence>
<evidence type="ECO:0000255" key="3"/>
<evidence type="ECO:0000269" key="4">
    <source>
    </source>
</evidence>
<evidence type="ECO:0000303" key="5">
    <source>
    </source>
</evidence>
<evidence type="ECO:0000305" key="6"/>
<sequence>MTTSIIKNQEIKNKLSNPELRLKDIIKTLPKECFQQNRRKAWTQALLSVVMVGLGYWSLAIAPWFLLPIAWIFTGTALTGFFVIGHDCGHRSFAKRRWVNDLVGHIFMMPLIYPFHSWRIKHNHHHKHTNKLDEDNAWHPIRPEVFASWGKTRQSAFKLFMRQRLWWVGSVGHWAVVHFDWRKFKVKDQADVKLSVAVVVLFAAVAFPTLIATTGIWGFVKFWFVPWLGYHFWMSTFTIVHHTYPDVPFEAENKWHEAMAQLFGTIHCDYPKWVEVLCHDINVHVPHHLSTAIPSYNLRLAYSSIQENWGDYLHDELRFSWSLMKLITDECQLYQTDVGYQPFKDYYAGR</sequence>
<proteinExistence type="evidence at protein level"/>
<feature type="chain" id="PRO_0000459814" description="sn-1 oleoyl-lipid 12-desaturase">
    <location>
        <begin position="1"/>
        <end position="350"/>
    </location>
</feature>
<feature type="transmembrane region" description="Helical" evidence="3">
    <location>
        <begin position="41"/>
        <end position="61"/>
    </location>
</feature>
<feature type="transmembrane region" description="Helical" evidence="3">
    <location>
        <begin position="64"/>
        <end position="84"/>
    </location>
</feature>
<feature type="transmembrane region" description="Helical" evidence="3">
    <location>
        <begin position="98"/>
        <end position="118"/>
    </location>
</feature>
<feature type="transmembrane region" description="Helical" evidence="3">
    <location>
        <begin position="196"/>
        <end position="216"/>
    </location>
</feature>
<feature type="transmembrane region" description="Helical" evidence="3">
    <location>
        <begin position="219"/>
        <end position="239"/>
    </location>
</feature>
<feature type="short sequence motif" description="Histidine box-1" evidence="2">
    <location>
        <begin position="86"/>
        <end position="90"/>
    </location>
</feature>
<feature type="short sequence motif" description="Histidine box-2" evidence="2">
    <location>
        <begin position="122"/>
        <end position="126"/>
    </location>
</feature>
<feature type="short sequence motif" description="Histidine box-3" evidence="2">
    <location>
        <begin position="287"/>
        <end position="291"/>
    </location>
</feature>
<gene>
    <name evidence="5" type="primary">desA</name>
</gene>
<protein>
    <recommendedName>
        <fullName evidence="6">sn-1 oleoyl-lipid 12-desaturase</fullName>
        <ecNumber evidence="4">1.14.19.45</ecNumber>
    </recommendedName>
    <alternativeName>
        <fullName evidence="6">Delta(12)-fatty-acid desaturase</fullName>
    </alternativeName>
</protein>
<reference key="1">
    <citation type="journal article" date="1994" name="Plant Mol. Biol.">
        <title>Identification of conserved domains in the delta 12 desaturases of cyanobacteria.</title>
        <authorList>
            <person name="Sakamoto T."/>
            <person name="Wada H."/>
            <person name="Nishida I."/>
            <person name="Ohmori M."/>
            <person name="Murata N."/>
        </authorList>
    </citation>
    <scope>NUCLEOTIDE SEQUENCE [GENOMIC DNA]</scope>
    <scope>FUNCTION</scope>
    <scope>CATALYTIC ACTIVITY</scope>
    <scope>PATHWAY</scope>
</reference>
<comment type="function">
    <text evidence="4">Desaturase involved in fatty acid biosynthesis (PubMed:8155883). Introduces a double bond at carbon 12 of oleoyl groups (18:1) attached to the sn-1 position of the glycerol moiety of membrane glycerolipids (PubMed:8155883).</text>
</comment>
<comment type="catalytic activity">
    <reaction evidence="4">
        <text>a 1-[(9Z)-octadecenoyl]-2-acyl-glycerolipid + 2 reduced [2Fe-2S]-[ferredoxin] + O2 + 2 H(+) = a 1-[(9Z,12Z)-octadecdienoyl]-2-acyl-glycerolipid + 2 oxidized [2Fe-2S]-[ferredoxin] + 2 H2O</text>
        <dbReference type="Rhea" id="RHEA:46776"/>
        <dbReference type="Rhea" id="RHEA-COMP:10000"/>
        <dbReference type="Rhea" id="RHEA-COMP:10001"/>
        <dbReference type="ChEBI" id="CHEBI:15377"/>
        <dbReference type="ChEBI" id="CHEBI:15378"/>
        <dbReference type="ChEBI" id="CHEBI:15379"/>
        <dbReference type="ChEBI" id="CHEBI:33737"/>
        <dbReference type="ChEBI" id="CHEBI:33738"/>
        <dbReference type="ChEBI" id="CHEBI:87008"/>
        <dbReference type="ChEBI" id="CHEBI:87010"/>
        <dbReference type="EC" id="1.14.19.45"/>
    </reaction>
    <physiologicalReaction direction="left-to-right" evidence="4">
        <dbReference type="Rhea" id="RHEA:46777"/>
    </physiologicalReaction>
</comment>
<comment type="cofactor">
    <cofactor evidence="1">
        <name>Fe(2+)</name>
        <dbReference type="ChEBI" id="CHEBI:29033"/>
    </cofactor>
</comment>
<comment type="pathway">
    <text evidence="4">Lipid metabolism; polyunsaturated fatty acid biosynthesis.</text>
</comment>
<comment type="subcellular location">
    <subcellularLocation>
        <location evidence="3">Membrane</location>
        <topology evidence="3">Multi-pass membrane protein</topology>
    </subcellularLocation>
</comment>
<comment type="domain">
    <text evidence="1">The histidine box domains are involved in binding the catalytic metal ions.</text>
</comment>
<comment type="similarity">
    <text evidence="6">Belongs to the fatty acid desaturase type 2 family.</text>
</comment>